<gene>
    <name evidence="1" type="primary">argG</name>
    <name type="ordered locus">LHK_02172</name>
</gene>
<sequence>MHEVKKVVLAYSGGLDTSVILKWLQDTYQCEVVTFTADIGQGEEVEPARKKALALGIKPENIFIDDLREEFVRDFVFPMFRANAVYEGEYLLGTSIARPLIAKRQIEIANMVGAEAVSHGATGKGNDQVRFELGYYALKPEVKVIAPWREWDLLSREKLLAYAETHGIDISKRKSGASPYSMDANLLHISYEGLALENPAAEPEEDMWLWSNSPEAAPDEAEYIELEYSQGDIVAVNGMAMSPAQVLTRLNQLGGKHGIGRLDIVENRYVGMKSRGCYETPGGTIMLKAHRAIESITLDREVAHLKDELMPKYAKLIYTGYWWAPERRMLQAMIDESQKTVNGWVRLKLYKGNVIVVGRESKTDSLFDPAIATFDEDGGAYNHADAAGFIRLNALRMRIAANARQRRG</sequence>
<proteinExistence type="inferred from homology"/>
<dbReference type="EC" id="6.3.4.5" evidence="1"/>
<dbReference type="EMBL" id="CP001154">
    <property type="protein sequence ID" value="ACO75156.1"/>
    <property type="molecule type" value="Genomic_DNA"/>
</dbReference>
<dbReference type="RefSeq" id="WP_012697642.1">
    <property type="nucleotide sequence ID" value="NC_012559.1"/>
</dbReference>
<dbReference type="SMR" id="C1D9Q4"/>
<dbReference type="STRING" id="557598.LHK_02172"/>
<dbReference type="KEGG" id="lhk:LHK_02172"/>
<dbReference type="eggNOG" id="COG0137">
    <property type="taxonomic scope" value="Bacteria"/>
</dbReference>
<dbReference type="HOGENOM" id="CLU_032784_4_2_4"/>
<dbReference type="UniPathway" id="UPA00068">
    <property type="reaction ID" value="UER00113"/>
</dbReference>
<dbReference type="Proteomes" id="UP000002010">
    <property type="component" value="Chromosome"/>
</dbReference>
<dbReference type="GO" id="GO:0005737">
    <property type="term" value="C:cytoplasm"/>
    <property type="evidence" value="ECO:0007669"/>
    <property type="project" value="UniProtKB-SubCell"/>
</dbReference>
<dbReference type="GO" id="GO:0004055">
    <property type="term" value="F:argininosuccinate synthase activity"/>
    <property type="evidence" value="ECO:0007669"/>
    <property type="project" value="UniProtKB-UniRule"/>
</dbReference>
<dbReference type="GO" id="GO:0005524">
    <property type="term" value="F:ATP binding"/>
    <property type="evidence" value="ECO:0007669"/>
    <property type="project" value="UniProtKB-UniRule"/>
</dbReference>
<dbReference type="GO" id="GO:0000053">
    <property type="term" value="P:argininosuccinate metabolic process"/>
    <property type="evidence" value="ECO:0007669"/>
    <property type="project" value="TreeGrafter"/>
</dbReference>
<dbReference type="GO" id="GO:0006526">
    <property type="term" value="P:L-arginine biosynthetic process"/>
    <property type="evidence" value="ECO:0007669"/>
    <property type="project" value="UniProtKB-UniRule"/>
</dbReference>
<dbReference type="GO" id="GO:0000050">
    <property type="term" value="P:urea cycle"/>
    <property type="evidence" value="ECO:0007669"/>
    <property type="project" value="TreeGrafter"/>
</dbReference>
<dbReference type="CDD" id="cd01999">
    <property type="entry name" value="ASS"/>
    <property type="match status" value="1"/>
</dbReference>
<dbReference type="FunFam" id="3.40.50.620:FF:000019">
    <property type="entry name" value="Argininosuccinate synthase"/>
    <property type="match status" value="1"/>
</dbReference>
<dbReference type="FunFam" id="3.90.1260.10:FF:000007">
    <property type="entry name" value="Argininosuccinate synthase"/>
    <property type="match status" value="1"/>
</dbReference>
<dbReference type="Gene3D" id="3.90.1260.10">
    <property type="entry name" value="Argininosuccinate synthetase, chain A, domain 2"/>
    <property type="match status" value="1"/>
</dbReference>
<dbReference type="Gene3D" id="3.40.50.620">
    <property type="entry name" value="HUPs"/>
    <property type="match status" value="1"/>
</dbReference>
<dbReference type="Gene3D" id="1.20.5.470">
    <property type="entry name" value="Single helix bin"/>
    <property type="match status" value="1"/>
</dbReference>
<dbReference type="HAMAP" id="MF_00005">
    <property type="entry name" value="Arg_succ_synth_type1"/>
    <property type="match status" value="1"/>
</dbReference>
<dbReference type="InterPro" id="IPR048268">
    <property type="entry name" value="Arginosuc_syn_C"/>
</dbReference>
<dbReference type="InterPro" id="IPR048267">
    <property type="entry name" value="Arginosuc_syn_N"/>
</dbReference>
<dbReference type="InterPro" id="IPR001518">
    <property type="entry name" value="Arginosuc_synth"/>
</dbReference>
<dbReference type="InterPro" id="IPR018223">
    <property type="entry name" value="Arginosuc_synth_CS"/>
</dbReference>
<dbReference type="InterPro" id="IPR023434">
    <property type="entry name" value="Arginosuc_synth_type_1_subfam"/>
</dbReference>
<dbReference type="InterPro" id="IPR024074">
    <property type="entry name" value="AS_cat/multimer_dom_body"/>
</dbReference>
<dbReference type="InterPro" id="IPR014729">
    <property type="entry name" value="Rossmann-like_a/b/a_fold"/>
</dbReference>
<dbReference type="NCBIfam" id="TIGR00032">
    <property type="entry name" value="argG"/>
    <property type="match status" value="1"/>
</dbReference>
<dbReference type="NCBIfam" id="NF001770">
    <property type="entry name" value="PRK00509.1"/>
    <property type="match status" value="1"/>
</dbReference>
<dbReference type="PANTHER" id="PTHR11587">
    <property type="entry name" value="ARGININOSUCCINATE SYNTHASE"/>
    <property type="match status" value="1"/>
</dbReference>
<dbReference type="PANTHER" id="PTHR11587:SF2">
    <property type="entry name" value="ARGININOSUCCINATE SYNTHASE"/>
    <property type="match status" value="1"/>
</dbReference>
<dbReference type="Pfam" id="PF20979">
    <property type="entry name" value="Arginosuc_syn_C"/>
    <property type="match status" value="1"/>
</dbReference>
<dbReference type="Pfam" id="PF00764">
    <property type="entry name" value="Arginosuc_synth"/>
    <property type="match status" value="1"/>
</dbReference>
<dbReference type="SUPFAM" id="SSF52402">
    <property type="entry name" value="Adenine nucleotide alpha hydrolases-like"/>
    <property type="match status" value="1"/>
</dbReference>
<dbReference type="SUPFAM" id="SSF69864">
    <property type="entry name" value="Argininosuccinate synthetase, C-terminal domain"/>
    <property type="match status" value="1"/>
</dbReference>
<dbReference type="PROSITE" id="PS00564">
    <property type="entry name" value="ARGININOSUCCIN_SYN_1"/>
    <property type="match status" value="1"/>
</dbReference>
<dbReference type="PROSITE" id="PS00565">
    <property type="entry name" value="ARGININOSUCCIN_SYN_2"/>
    <property type="match status" value="1"/>
</dbReference>
<accession>C1D9Q4</accession>
<keyword id="KW-0028">Amino-acid biosynthesis</keyword>
<keyword id="KW-0055">Arginine biosynthesis</keyword>
<keyword id="KW-0067">ATP-binding</keyword>
<keyword id="KW-0963">Cytoplasm</keyword>
<keyword id="KW-0436">Ligase</keyword>
<keyword id="KW-0547">Nucleotide-binding</keyword>
<keyword id="KW-1185">Reference proteome</keyword>
<protein>
    <recommendedName>
        <fullName evidence="1">Argininosuccinate synthase</fullName>
        <ecNumber evidence="1">6.3.4.5</ecNumber>
    </recommendedName>
    <alternativeName>
        <fullName evidence="1">Citrulline--aspartate ligase</fullName>
    </alternativeName>
</protein>
<feature type="chain" id="PRO_1000191895" description="Argininosuccinate synthase">
    <location>
        <begin position="1"/>
        <end position="408"/>
    </location>
</feature>
<feature type="binding site" evidence="1">
    <location>
        <begin position="10"/>
        <end position="18"/>
    </location>
    <ligand>
        <name>ATP</name>
        <dbReference type="ChEBI" id="CHEBI:30616"/>
    </ligand>
</feature>
<feature type="binding site" evidence="1">
    <location>
        <position position="37"/>
    </location>
    <ligand>
        <name>ATP</name>
        <dbReference type="ChEBI" id="CHEBI:30616"/>
    </ligand>
</feature>
<feature type="binding site" evidence="1">
    <location>
        <position position="90"/>
    </location>
    <ligand>
        <name>L-citrulline</name>
        <dbReference type="ChEBI" id="CHEBI:57743"/>
    </ligand>
</feature>
<feature type="binding site" evidence="1">
    <location>
        <position position="95"/>
    </location>
    <ligand>
        <name>L-citrulline</name>
        <dbReference type="ChEBI" id="CHEBI:57743"/>
    </ligand>
</feature>
<feature type="binding site" evidence="1">
    <location>
        <position position="120"/>
    </location>
    <ligand>
        <name>ATP</name>
        <dbReference type="ChEBI" id="CHEBI:30616"/>
    </ligand>
</feature>
<feature type="binding site" evidence="1">
    <location>
        <position position="122"/>
    </location>
    <ligand>
        <name>L-aspartate</name>
        <dbReference type="ChEBI" id="CHEBI:29991"/>
    </ligand>
</feature>
<feature type="binding site" evidence="1">
    <location>
        <position position="126"/>
    </location>
    <ligand>
        <name>L-aspartate</name>
        <dbReference type="ChEBI" id="CHEBI:29991"/>
    </ligand>
</feature>
<feature type="binding site" evidence="1">
    <location>
        <position position="126"/>
    </location>
    <ligand>
        <name>L-citrulline</name>
        <dbReference type="ChEBI" id="CHEBI:57743"/>
    </ligand>
</feature>
<feature type="binding site" evidence="1">
    <location>
        <position position="127"/>
    </location>
    <ligand>
        <name>L-aspartate</name>
        <dbReference type="ChEBI" id="CHEBI:29991"/>
    </ligand>
</feature>
<feature type="binding site" evidence="1">
    <location>
        <position position="130"/>
    </location>
    <ligand>
        <name>L-citrulline</name>
        <dbReference type="ChEBI" id="CHEBI:57743"/>
    </ligand>
</feature>
<feature type="binding site" evidence="1">
    <location>
        <position position="181"/>
    </location>
    <ligand>
        <name>L-citrulline</name>
        <dbReference type="ChEBI" id="CHEBI:57743"/>
    </ligand>
</feature>
<feature type="binding site" evidence="1">
    <location>
        <position position="190"/>
    </location>
    <ligand>
        <name>L-citrulline</name>
        <dbReference type="ChEBI" id="CHEBI:57743"/>
    </ligand>
</feature>
<feature type="binding site" evidence="1">
    <location>
        <position position="266"/>
    </location>
    <ligand>
        <name>L-citrulline</name>
        <dbReference type="ChEBI" id="CHEBI:57743"/>
    </ligand>
</feature>
<feature type="binding site" evidence="1">
    <location>
        <position position="278"/>
    </location>
    <ligand>
        <name>L-citrulline</name>
        <dbReference type="ChEBI" id="CHEBI:57743"/>
    </ligand>
</feature>
<evidence type="ECO:0000255" key="1">
    <source>
        <dbReference type="HAMAP-Rule" id="MF_00005"/>
    </source>
</evidence>
<reference key="1">
    <citation type="journal article" date="2009" name="PLoS Genet.">
        <title>The complete genome and proteome of Laribacter hongkongensis reveal potential mechanisms for adaptations to different temperatures and habitats.</title>
        <authorList>
            <person name="Woo P.C.Y."/>
            <person name="Lau S.K.P."/>
            <person name="Tse H."/>
            <person name="Teng J.L.L."/>
            <person name="Curreem S.O."/>
            <person name="Tsang A.K.L."/>
            <person name="Fan R.Y.Y."/>
            <person name="Wong G.K.M."/>
            <person name="Huang Y."/>
            <person name="Loman N.J."/>
            <person name="Snyder L.A.S."/>
            <person name="Cai J.J."/>
            <person name="Huang J.-D."/>
            <person name="Mak W."/>
            <person name="Pallen M.J."/>
            <person name="Lok S."/>
            <person name="Yuen K.-Y."/>
        </authorList>
    </citation>
    <scope>NUCLEOTIDE SEQUENCE [LARGE SCALE GENOMIC DNA]</scope>
    <source>
        <strain>HLHK9</strain>
    </source>
</reference>
<name>ASSY_LARHH</name>
<organism>
    <name type="scientific">Laribacter hongkongensis (strain HLHK9)</name>
    <dbReference type="NCBI Taxonomy" id="557598"/>
    <lineage>
        <taxon>Bacteria</taxon>
        <taxon>Pseudomonadati</taxon>
        <taxon>Pseudomonadota</taxon>
        <taxon>Betaproteobacteria</taxon>
        <taxon>Neisseriales</taxon>
        <taxon>Aquaspirillaceae</taxon>
        <taxon>Laribacter</taxon>
    </lineage>
</organism>
<comment type="catalytic activity">
    <reaction evidence="1">
        <text>L-citrulline + L-aspartate + ATP = 2-(N(omega)-L-arginino)succinate + AMP + diphosphate + H(+)</text>
        <dbReference type="Rhea" id="RHEA:10932"/>
        <dbReference type="ChEBI" id="CHEBI:15378"/>
        <dbReference type="ChEBI" id="CHEBI:29991"/>
        <dbReference type="ChEBI" id="CHEBI:30616"/>
        <dbReference type="ChEBI" id="CHEBI:33019"/>
        <dbReference type="ChEBI" id="CHEBI:57472"/>
        <dbReference type="ChEBI" id="CHEBI:57743"/>
        <dbReference type="ChEBI" id="CHEBI:456215"/>
        <dbReference type="EC" id="6.3.4.5"/>
    </reaction>
</comment>
<comment type="pathway">
    <text evidence="1">Amino-acid biosynthesis; L-arginine biosynthesis; L-arginine from L-ornithine and carbamoyl phosphate: step 2/3.</text>
</comment>
<comment type="subunit">
    <text evidence="1">Homotetramer.</text>
</comment>
<comment type="subcellular location">
    <subcellularLocation>
        <location evidence="1">Cytoplasm</location>
    </subcellularLocation>
</comment>
<comment type="similarity">
    <text evidence="1">Belongs to the argininosuccinate synthase family. Type 1 subfamily.</text>
</comment>